<gene>
    <name evidence="1" type="primary">citD</name>
    <name type="ordered locus">Hore_04670</name>
</gene>
<accession>B8D1Z8</accession>
<protein>
    <recommendedName>
        <fullName evidence="1">Citrate lyase acyl carrier protein</fullName>
    </recommendedName>
    <alternativeName>
        <fullName evidence="1">Citrate lyase gamma chain</fullName>
    </alternativeName>
</protein>
<feature type="chain" id="PRO_1000148563" description="Citrate lyase acyl carrier protein">
    <location>
        <begin position="1"/>
        <end position="94"/>
    </location>
</feature>
<feature type="modified residue" description="O-(phosphoribosyl dephospho-coenzyme A)serine" evidence="1">
    <location>
        <position position="14"/>
    </location>
</feature>
<evidence type="ECO:0000255" key="1">
    <source>
        <dbReference type="HAMAP-Rule" id="MF_00805"/>
    </source>
</evidence>
<name>CITD_HALOH</name>
<organism>
    <name type="scientific">Halothermothrix orenii (strain H 168 / OCM 544 / DSM 9562)</name>
    <dbReference type="NCBI Taxonomy" id="373903"/>
    <lineage>
        <taxon>Bacteria</taxon>
        <taxon>Bacillati</taxon>
        <taxon>Bacillota</taxon>
        <taxon>Clostridia</taxon>
        <taxon>Halanaerobiales</taxon>
        <taxon>Halothermotrichaceae</taxon>
        <taxon>Halothermothrix</taxon>
    </lineage>
</organism>
<reference key="1">
    <citation type="journal article" date="2009" name="PLoS ONE">
        <title>Genome analysis of the anaerobic thermohalophilic bacterium Halothermothrix orenii.</title>
        <authorList>
            <person name="Mavromatis K."/>
            <person name="Ivanova N."/>
            <person name="Anderson I."/>
            <person name="Lykidis A."/>
            <person name="Hooper S.D."/>
            <person name="Sun H."/>
            <person name="Kunin V."/>
            <person name="Lapidus A."/>
            <person name="Hugenholtz P."/>
            <person name="Patel B."/>
            <person name="Kyrpides N.C."/>
        </authorList>
    </citation>
    <scope>NUCLEOTIDE SEQUENCE [LARGE SCALE GENOMIC DNA]</scope>
    <source>
        <strain>H 168 / OCM 544 / DSM 9562</strain>
    </source>
</reference>
<keyword id="KW-0963">Cytoplasm</keyword>
<keyword id="KW-0597">Phosphoprotein</keyword>
<keyword id="KW-1185">Reference proteome</keyword>
<comment type="function">
    <text evidence="1">Covalent carrier of the coenzyme of citrate lyase.</text>
</comment>
<comment type="subunit">
    <text evidence="1">Oligomer with a subunit composition of (alpha,beta,gamma)6.</text>
</comment>
<comment type="subcellular location">
    <subcellularLocation>
        <location evidence="1">Cytoplasm</location>
    </subcellularLocation>
</comment>
<comment type="similarity">
    <text evidence="1">Belongs to the CitD family.</text>
</comment>
<sequence>MEIKRTASAGTMESSDIMITVKPSNNGIKIELKSDVEKQFGNQVKKIIKNTIEGMGVKNVYIRAQDRGALDYAIKARTRTALERASKGAEEIEK</sequence>
<dbReference type="EMBL" id="CP001098">
    <property type="protein sequence ID" value="ACL69225.1"/>
    <property type="molecule type" value="Genomic_DNA"/>
</dbReference>
<dbReference type="RefSeq" id="WP_012635413.1">
    <property type="nucleotide sequence ID" value="NC_011899.1"/>
</dbReference>
<dbReference type="SMR" id="B8D1Z8"/>
<dbReference type="STRING" id="373903.Hore_04670"/>
<dbReference type="KEGG" id="hor:Hore_04670"/>
<dbReference type="eggNOG" id="COG3052">
    <property type="taxonomic scope" value="Bacteria"/>
</dbReference>
<dbReference type="HOGENOM" id="CLU_158489_1_0_9"/>
<dbReference type="OrthoDB" id="1120942at2"/>
<dbReference type="Proteomes" id="UP000000719">
    <property type="component" value="Chromosome"/>
</dbReference>
<dbReference type="GO" id="GO:0005737">
    <property type="term" value="C:cytoplasm"/>
    <property type="evidence" value="ECO:0007669"/>
    <property type="project" value="UniProtKB-SubCell"/>
</dbReference>
<dbReference type="HAMAP" id="MF_00805">
    <property type="entry name" value="CitD"/>
    <property type="match status" value="1"/>
</dbReference>
<dbReference type="InterPro" id="IPR006495">
    <property type="entry name" value="CitD"/>
</dbReference>
<dbReference type="InterPro" id="IPR023439">
    <property type="entry name" value="Mal_deCO2ase/Cit_lyase_ACP"/>
</dbReference>
<dbReference type="NCBIfam" id="TIGR01608">
    <property type="entry name" value="citD"/>
    <property type="match status" value="1"/>
</dbReference>
<dbReference type="NCBIfam" id="NF009726">
    <property type="entry name" value="PRK13253.1"/>
    <property type="match status" value="1"/>
</dbReference>
<dbReference type="Pfam" id="PF06857">
    <property type="entry name" value="ACP"/>
    <property type="match status" value="1"/>
</dbReference>
<dbReference type="PIRSF" id="PIRSF002736">
    <property type="entry name" value="Citrt_lyas_gamma"/>
    <property type="match status" value="1"/>
</dbReference>
<proteinExistence type="inferred from homology"/>